<keyword id="KW-0903">Direct protein sequencing</keyword>
<keyword id="KW-0249">Electron transport</keyword>
<keyword id="KW-0285">Flavoprotein</keyword>
<keyword id="KW-0288">FMN</keyword>
<keyword id="KW-0520">NAD</keyword>
<keyword id="KW-0560">Oxidoreductase</keyword>
<keyword id="KW-0813">Transport</keyword>
<reference evidence="3" key="1">
    <citation type="journal article" date="2004" name="Eur. J. Biochem.">
        <title>Isolation and biochemical characterization of two soluble iron(III) reductases from Paracoccus denitrificans.</title>
        <authorList>
            <person name="Mazoch J."/>
            <person name="Tesarik R."/>
            <person name="Sedlacek V."/>
            <person name="Kucera I."/>
            <person name="Turanek J."/>
        </authorList>
    </citation>
    <scope>PROTEIN SEQUENCE</scope>
    <scope>FUNCTION</scope>
    <scope>CATALYTIC ACTIVITY</scope>
    <scope>SUBUNIT</scope>
    <scope>INDUCTION</scope>
    <scope>MASS SPECTROMETRY</scope>
</reference>
<feature type="chain" id="PRO_0000087227" description="Ferric reductase A">
    <location>
        <begin position="1"/>
        <end position="20" status="greater than"/>
    </location>
</feature>
<feature type="non-terminal residue" evidence="2">
    <location>
        <position position="20"/>
    </location>
</feature>
<proteinExistence type="evidence at protein level"/>
<gene>
    <name type="primary">ferA</name>
</gene>
<comment type="function">
    <text evidence="1">Reductase activity that acts on Fe(3+)-chelates and NADH as an electron donor and requires the presence of FMN for full activity. May play a role in iron uptake.</text>
</comment>
<comment type="catalytic activity">
    <reaction evidence="1">
        <text>2 a Fe(II)-siderophore + NAD(+) + H(+) = 2 a Fe(III)-siderophore + NADH</text>
        <dbReference type="Rhea" id="RHEA:15061"/>
        <dbReference type="Rhea" id="RHEA-COMP:11342"/>
        <dbReference type="Rhea" id="RHEA-COMP:11344"/>
        <dbReference type="ChEBI" id="CHEBI:15378"/>
        <dbReference type="ChEBI" id="CHEBI:29033"/>
        <dbReference type="ChEBI" id="CHEBI:29034"/>
        <dbReference type="ChEBI" id="CHEBI:57540"/>
        <dbReference type="ChEBI" id="CHEBI:57945"/>
        <dbReference type="EC" id="1.16.1.7"/>
    </reaction>
</comment>
<comment type="subunit">
    <text evidence="1">Monomer.</text>
</comment>
<comment type="induction">
    <text evidence="1">By Fe(3+) ion deprivation.</text>
</comment>
<comment type="mass spectrometry">
    <text>It is not clear why there are 2 peaks for this protein.</text>
</comment>
<comment type="mass spectrometry"/>
<sequence>SRLPPATRDKLADEITFFPA</sequence>
<evidence type="ECO:0000269" key="1">
    <source>
    </source>
</evidence>
<evidence type="ECO:0000303" key="2">
    <source>
    </source>
</evidence>
<evidence type="ECO:0000305" key="3"/>
<name>FERA_PARDE</name>
<dbReference type="EC" id="1.16.1.7"/>
<dbReference type="SABIO-RK" id="P84468"/>
<dbReference type="GO" id="GO:0140618">
    <property type="term" value="F:ferric-chelate reductase (NADH) activity"/>
    <property type="evidence" value="ECO:0007669"/>
    <property type="project" value="UniProtKB-EC"/>
</dbReference>
<protein>
    <recommendedName>
        <fullName>Ferric reductase A</fullName>
        <ecNumber>1.16.1.7</ecNumber>
    </recommendedName>
</protein>
<accession>P84468</accession>
<organism>
    <name type="scientific">Paracoccus denitrificans</name>
    <dbReference type="NCBI Taxonomy" id="266"/>
    <lineage>
        <taxon>Bacteria</taxon>
        <taxon>Pseudomonadati</taxon>
        <taxon>Pseudomonadota</taxon>
        <taxon>Alphaproteobacteria</taxon>
        <taxon>Rhodobacterales</taxon>
        <taxon>Paracoccaceae</taxon>
        <taxon>Paracoccus</taxon>
    </lineage>
</organism>